<sequence>MSDNNQCVIVGIAGASASGKSLIASTIYNELREKVGDHQIGVITEDCYYNDQSQLSMEERVKTNYDHPSALDHDLLCEHLEKLVRGEAVEVPEYSYTEHTRTSNTTPMTPKKVIILEGILLLTDPRLRDLMHATVFMDTPLDICLLRRVKRDVEERGRTMESVLKQYQQTVRPMFMQFIEPSKQYADIIVPRGGKNRIAIDVLKAHIAKLLKA</sequence>
<dbReference type="EC" id="2.7.1.48" evidence="1"/>
<dbReference type="EMBL" id="CP000789">
    <property type="protein sequence ID" value="ABU71877.1"/>
    <property type="molecule type" value="Genomic_DNA"/>
</dbReference>
<dbReference type="RefSeq" id="WP_005433235.1">
    <property type="nucleotide sequence ID" value="NC_022269.1"/>
</dbReference>
<dbReference type="SMR" id="A7MVE7"/>
<dbReference type="GeneID" id="83581121"/>
<dbReference type="KEGG" id="vha:VIBHAR_02924"/>
<dbReference type="PATRIC" id="fig|338187.25.peg.3261"/>
<dbReference type="UniPathway" id="UPA00574">
    <property type="reaction ID" value="UER00637"/>
</dbReference>
<dbReference type="UniPathway" id="UPA00579">
    <property type="reaction ID" value="UER00640"/>
</dbReference>
<dbReference type="Proteomes" id="UP000008152">
    <property type="component" value="Chromosome I"/>
</dbReference>
<dbReference type="GO" id="GO:0005737">
    <property type="term" value="C:cytoplasm"/>
    <property type="evidence" value="ECO:0007669"/>
    <property type="project" value="UniProtKB-SubCell"/>
</dbReference>
<dbReference type="GO" id="GO:0005524">
    <property type="term" value="F:ATP binding"/>
    <property type="evidence" value="ECO:0007669"/>
    <property type="project" value="UniProtKB-UniRule"/>
</dbReference>
<dbReference type="GO" id="GO:0043771">
    <property type="term" value="F:cytidine kinase activity"/>
    <property type="evidence" value="ECO:0007669"/>
    <property type="project" value="RHEA"/>
</dbReference>
<dbReference type="GO" id="GO:0004849">
    <property type="term" value="F:uridine kinase activity"/>
    <property type="evidence" value="ECO:0007669"/>
    <property type="project" value="UniProtKB-UniRule"/>
</dbReference>
<dbReference type="GO" id="GO:0044211">
    <property type="term" value="P:CTP salvage"/>
    <property type="evidence" value="ECO:0007669"/>
    <property type="project" value="UniProtKB-UniRule"/>
</dbReference>
<dbReference type="GO" id="GO:0044206">
    <property type="term" value="P:UMP salvage"/>
    <property type="evidence" value="ECO:0007669"/>
    <property type="project" value="UniProtKB-UniRule"/>
</dbReference>
<dbReference type="CDD" id="cd02023">
    <property type="entry name" value="UMPK"/>
    <property type="match status" value="1"/>
</dbReference>
<dbReference type="FunFam" id="3.40.50.300:FF:000252">
    <property type="entry name" value="Uridine kinase"/>
    <property type="match status" value="1"/>
</dbReference>
<dbReference type="Gene3D" id="3.40.50.300">
    <property type="entry name" value="P-loop containing nucleotide triphosphate hydrolases"/>
    <property type="match status" value="1"/>
</dbReference>
<dbReference type="HAMAP" id="MF_00551">
    <property type="entry name" value="Uridine_kinase"/>
    <property type="match status" value="1"/>
</dbReference>
<dbReference type="InterPro" id="IPR027417">
    <property type="entry name" value="P-loop_NTPase"/>
</dbReference>
<dbReference type="InterPro" id="IPR006083">
    <property type="entry name" value="PRK/URK"/>
</dbReference>
<dbReference type="InterPro" id="IPR026008">
    <property type="entry name" value="Uridine_kinase"/>
</dbReference>
<dbReference type="InterPro" id="IPR000764">
    <property type="entry name" value="Uridine_kinase-like"/>
</dbReference>
<dbReference type="NCBIfam" id="NF004018">
    <property type="entry name" value="PRK05480.1"/>
    <property type="match status" value="1"/>
</dbReference>
<dbReference type="NCBIfam" id="TIGR00235">
    <property type="entry name" value="udk"/>
    <property type="match status" value="1"/>
</dbReference>
<dbReference type="PANTHER" id="PTHR10285">
    <property type="entry name" value="URIDINE KINASE"/>
    <property type="match status" value="1"/>
</dbReference>
<dbReference type="Pfam" id="PF00485">
    <property type="entry name" value="PRK"/>
    <property type="match status" value="1"/>
</dbReference>
<dbReference type="PRINTS" id="PR00988">
    <property type="entry name" value="URIDINKINASE"/>
</dbReference>
<dbReference type="SUPFAM" id="SSF52540">
    <property type="entry name" value="P-loop containing nucleoside triphosphate hydrolases"/>
    <property type="match status" value="1"/>
</dbReference>
<accession>A7MVE7</accession>
<organism>
    <name type="scientific">Vibrio campbellii (strain ATCC BAA-1116)</name>
    <dbReference type="NCBI Taxonomy" id="2902295"/>
    <lineage>
        <taxon>Bacteria</taxon>
        <taxon>Pseudomonadati</taxon>
        <taxon>Pseudomonadota</taxon>
        <taxon>Gammaproteobacteria</taxon>
        <taxon>Vibrionales</taxon>
        <taxon>Vibrionaceae</taxon>
        <taxon>Vibrio</taxon>
    </lineage>
</organism>
<feature type="chain" id="PRO_1000017914" description="Uridine kinase">
    <location>
        <begin position="1"/>
        <end position="213"/>
    </location>
</feature>
<feature type="binding site" evidence="1">
    <location>
        <begin position="14"/>
        <end position="21"/>
    </location>
    <ligand>
        <name>ATP</name>
        <dbReference type="ChEBI" id="CHEBI:30616"/>
    </ligand>
</feature>
<reference key="1">
    <citation type="submission" date="2007-08" db="EMBL/GenBank/DDBJ databases">
        <authorList>
            <consortium name="The Vibrio harveyi Genome Sequencing Project"/>
            <person name="Bassler B."/>
            <person name="Clifton S.W."/>
            <person name="Fulton L."/>
            <person name="Delehaunty K."/>
            <person name="Fronick C."/>
            <person name="Harrison M."/>
            <person name="Markivic C."/>
            <person name="Fulton R."/>
            <person name="Tin-Wollam A.-M."/>
            <person name="Shah N."/>
            <person name="Pepin K."/>
            <person name="Nash W."/>
            <person name="Thiruvilangam P."/>
            <person name="Bhonagiri V."/>
            <person name="Waters C."/>
            <person name="Tu K.C."/>
            <person name="Irgon J."/>
            <person name="Wilson R.K."/>
        </authorList>
    </citation>
    <scope>NUCLEOTIDE SEQUENCE [LARGE SCALE GENOMIC DNA]</scope>
    <source>
        <strain>ATCC BAA-1116 / BB120</strain>
    </source>
</reference>
<keyword id="KW-0067">ATP-binding</keyword>
<keyword id="KW-0963">Cytoplasm</keyword>
<keyword id="KW-0418">Kinase</keyword>
<keyword id="KW-0547">Nucleotide-binding</keyword>
<keyword id="KW-0808">Transferase</keyword>
<gene>
    <name evidence="1" type="primary">udk</name>
    <name type="ordered locus">VIBHAR_02924</name>
</gene>
<name>URK_VIBC1</name>
<evidence type="ECO:0000255" key="1">
    <source>
        <dbReference type="HAMAP-Rule" id="MF_00551"/>
    </source>
</evidence>
<comment type="catalytic activity">
    <reaction evidence="1">
        <text>uridine + ATP = UMP + ADP + H(+)</text>
        <dbReference type="Rhea" id="RHEA:16825"/>
        <dbReference type="ChEBI" id="CHEBI:15378"/>
        <dbReference type="ChEBI" id="CHEBI:16704"/>
        <dbReference type="ChEBI" id="CHEBI:30616"/>
        <dbReference type="ChEBI" id="CHEBI:57865"/>
        <dbReference type="ChEBI" id="CHEBI:456216"/>
        <dbReference type="EC" id="2.7.1.48"/>
    </reaction>
</comment>
<comment type="catalytic activity">
    <reaction evidence="1">
        <text>cytidine + ATP = CMP + ADP + H(+)</text>
        <dbReference type="Rhea" id="RHEA:24674"/>
        <dbReference type="ChEBI" id="CHEBI:15378"/>
        <dbReference type="ChEBI" id="CHEBI:17562"/>
        <dbReference type="ChEBI" id="CHEBI:30616"/>
        <dbReference type="ChEBI" id="CHEBI:60377"/>
        <dbReference type="ChEBI" id="CHEBI:456216"/>
        <dbReference type="EC" id="2.7.1.48"/>
    </reaction>
</comment>
<comment type="pathway">
    <text evidence="1">Pyrimidine metabolism; CTP biosynthesis via salvage pathway; CTP from cytidine: step 1/3.</text>
</comment>
<comment type="pathway">
    <text evidence="1">Pyrimidine metabolism; UMP biosynthesis via salvage pathway; UMP from uridine: step 1/1.</text>
</comment>
<comment type="subcellular location">
    <subcellularLocation>
        <location evidence="1">Cytoplasm</location>
    </subcellularLocation>
</comment>
<comment type="similarity">
    <text evidence="1">Belongs to the uridine kinase family.</text>
</comment>
<proteinExistence type="inferred from homology"/>
<protein>
    <recommendedName>
        <fullName evidence="1">Uridine kinase</fullName>
        <ecNumber evidence="1">2.7.1.48</ecNumber>
    </recommendedName>
    <alternativeName>
        <fullName evidence="1">Cytidine monophosphokinase</fullName>
    </alternativeName>
    <alternativeName>
        <fullName evidence="1">Uridine monophosphokinase</fullName>
    </alternativeName>
</protein>